<organism>
    <name type="scientific">Mus musculus</name>
    <name type="common">Mouse</name>
    <dbReference type="NCBI Taxonomy" id="10090"/>
    <lineage>
        <taxon>Eukaryota</taxon>
        <taxon>Metazoa</taxon>
        <taxon>Chordata</taxon>
        <taxon>Craniata</taxon>
        <taxon>Vertebrata</taxon>
        <taxon>Euteleostomi</taxon>
        <taxon>Mammalia</taxon>
        <taxon>Eutheria</taxon>
        <taxon>Euarchontoglires</taxon>
        <taxon>Glires</taxon>
        <taxon>Rodentia</taxon>
        <taxon>Myomorpha</taxon>
        <taxon>Muroidea</taxon>
        <taxon>Muridae</taxon>
        <taxon>Murinae</taxon>
        <taxon>Mus</taxon>
        <taxon>Mus</taxon>
    </lineage>
</organism>
<protein>
    <recommendedName>
        <fullName>Killer cell lectin-like receptor 4</fullName>
    </recommendedName>
    <alternativeName>
        <fullName>Lymphocyte antigen 49d</fullName>
        <shortName>Ly-49d</shortName>
    </alternativeName>
    <alternativeName>
        <fullName>T-cell surface glycoprotein Ly-49D</fullName>
    </alternativeName>
</protein>
<dbReference type="EMBL" id="U10090">
    <property type="protein sequence ID" value="AAA50218.1"/>
    <property type="molecule type" value="mRNA"/>
</dbReference>
<dbReference type="EMBL" id="L78247">
    <property type="protein sequence ID" value="AAC32667.1"/>
    <property type="molecule type" value="mRNA"/>
</dbReference>
<dbReference type="EMBL" id="AF218079">
    <property type="protein sequence ID" value="AAF99592.1"/>
    <property type="molecule type" value="mRNA"/>
</dbReference>
<dbReference type="EMBL" id="AF218078">
    <property type="protein sequence ID" value="AAF99591.1"/>
    <property type="molecule type" value="mRNA"/>
</dbReference>
<dbReference type="CCDS" id="CCDS57457.1">
    <molecule id="Q60651-1"/>
</dbReference>
<dbReference type="PIR" id="I49049">
    <property type="entry name" value="I49049"/>
</dbReference>
<dbReference type="RefSeq" id="NP_001239506.1">
    <molecule id="Q60651-1"/>
    <property type="nucleotide sequence ID" value="NM_001252577.2"/>
</dbReference>
<dbReference type="RefSeq" id="NP_001398775.1">
    <molecule id="Q60651-1"/>
    <property type="nucleotide sequence ID" value="NM_001411846.1"/>
</dbReference>
<dbReference type="RefSeq" id="NP_034779.1">
    <molecule id="Q60651-2"/>
    <property type="nucleotide sequence ID" value="NM_010649.4"/>
</dbReference>
<dbReference type="RefSeq" id="XP_006505709.1">
    <property type="nucleotide sequence ID" value="XM_006505646.1"/>
</dbReference>
<dbReference type="SMR" id="Q60651"/>
<dbReference type="BioGRID" id="200996">
    <property type="interactions" value="1"/>
</dbReference>
<dbReference type="FunCoup" id="Q60651">
    <property type="interactions" value="206"/>
</dbReference>
<dbReference type="STRING" id="10090.ENSMUSP00000114004"/>
<dbReference type="GlyCosmos" id="Q60651">
    <property type="glycosylation" value="4 sites, No reported glycans"/>
</dbReference>
<dbReference type="GlyGen" id="Q60651">
    <property type="glycosylation" value="5 sites, 1 N-linked glycan (1 site), 1 O-linked glycan (1 site)"/>
</dbReference>
<dbReference type="iPTMnet" id="Q60651"/>
<dbReference type="PaxDb" id="10090-ENSMUSP00000114004"/>
<dbReference type="ProteomicsDB" id="263557">
    <molecule id="Q60651-1"/>
</dbReference>
<dbReference type="ProteomicsDB" id="263558">
    <molecule id="Q60651-2"/>
</dbReference>
<dbReference type="DNASU" id="16635"/>
<dbReference type="Ensembl" id="ENSMUST00000119096.2">
    <molecule id="Q60651-1"/>
    <property type="protein sequence ID" value="ENSMUSP00000114004.2"/>
    <property type="gene ID" value="ENSMUSG00000079852.5"/>
</dbReference>
<dbReference type="GeneID" id="16635"/>
<dbReference type="KEGG" id="mmu:16635"/>
<dbReference type="UCSC" id="uc009ehh.2">
    <molecule id="Q60651-2"/>
    <property type="organism name" value="mouse"/>
</dbReference>
<dbReference type="UCSC" id="uc009ehi.1">
    <molecule id="Q60651-1"/>
    <property type="organism name" value="mouse"/>
</dbReference>
<dbReference type="AGR" id="MGI:101904"/>
<dbReference type="CTD" id="16635"/>
<dbReference type="MGI" id="MGI:101904">
    <property type="gene designation" value="Klra4"/>
</dbReference>
<dbReference type="VEuPathDB" id="HostDB:ENSMUSG00000079852"/>
<dbReference type="eggNOG" id="KOG4297">
    <property type="taxonomic scope" value="Eukaryota"/>
</dbReference>
<dbReference type="GeneTree" id="ENSGT00390000008117"/>
<dbReference type="HOGENOM" id="CLU_049894_1_0_1"/>
<dbReference type="InParanoid" id="Q60651"/>
<dbReference type="OMA" id="QSFICIC"/>
<dbReference type="OrthoDB" id="2142683at2759"/>
<dbReference type="PhylomeDB" id="Q60651"/>
<dbReference type="TreeFam" id="TF336674"/>
<dbReference type="BioGRID-ORCS" id="16635">
    <property type="hits" value="1 hit in 76 CRISPR screens"/>
</dbReference>
<dbReference type="ChiTaRS" id="Klra4">
    <property type="organism name" value="mouse"/>
</dbReference>
<dbReference type="PRO" id="PR:Q60651"/>
<dbReference type="Proteomes" id="UP000000589">
    <property type="component" value="Chromosome 6"/>
</dbReference>
<dbReference type="RNAct" id="Q60651">
    <property type="molecule type" value="protein"/>
</dbReference>
<dbReference type="Bgee" id="ENSMUSG00000079852">
    <property type="expression patterns" value="Expressed in umbilical cord and 115 other cell types or tissues"/>
</dbReference>
<dbReference type="ExpressionAtlas" id="Q60651">
    <property type="expression patterns" value="baseline and differential"/>
</dbReference>
<dbReference type="GO" id="GO:0009986">
    <property type="term" value="C:cell surface"/>
    <property type="evidence" value="ECO:0000314"/>
    <property type="project" value="UniProtKB"/>
</dbReference>
<dbReference type="GO" id="GO:0009897">
    <property type="term" value="C:external side of plasma membrane"/>
    <property type="evidence" value="ECO:0000314"/>
    <property type="project" value="MGI"/>
</dbReference>
<dbReference type="GO" id="GO:0005886">
    <property type="term" value="C:plasma membrane"/>
    <property type="evidence" value="ECO:0000304"/>
    <property type="project" value="Reactome"/>
</dbReference>
<dbReference type="GO" id="GO:0030246">
    <property type="term" value="F:carbohydrate binding"/>
    <property type="evidence" value="ECO:0007669"/>
    <property type="project" value="UniProtKB-KW"/>
</dbReference>
<dbReference type="GO" id="GO:0007155">
    <property type="term" value="P:cell adhesion"/>
    <property type="evidence" value="ECO:0007669"/>
    <property type="project" value="UniProtKB-KW"/>
</dbReference>
<dbReference type="CDD" id="cd03593">
    <property type="entry name" value="CLECT_NK_receptors_like"/>
    <property type="match status" value="1"/>
</dbReference>
<dbReference type="FunFam" id="3.10.100.10:FF:000053">
    <property type="entry name" value="Killer cell lectin-like receptor 3"/>
    <property type="match status" value="1"/>
</dbReference>
<dbReference type="Gene3D" id="3.10.100.10">
    <property type="entry name" value="Mannose-Binding Protein A, subunit A"/>
    <property type="match status" value="1"/>
</dbReference>
<dbReference type="InterPro" id="IPR001304">
    <property type="entry name" value="C-type_lectin-like"/>
</dbReference>
<dbReference type="InterPro" id="IPR016186">
    <property type="entry name" value="C-type_lectin-like/link_sf"/>
</dbReference>
<dbReference type="InterPro" id="IPR016187">
    <property type="entry name" value="CTDL_fold"/>
</dbReference>
<dbReference type="InterPro" id="IPR013600">
    <property type="entry name" value="Ly49_N"/>
</dbReference>
<dbReference type="InterPro" id="IPR052013">
    <property type="entry name" value="Mouse_KLRs"/>
</dbReference>
<dbReference type="InterPro" id="IPR033992">
    <property type="entry name" value="NKR-like_CTLD"/>
</dbReference>
<dbReference type="PANTHER" id="PTHR46329">
    <property type="entry name" value="KILLER CELL LECTIN-LIKE RECEPTOR 2"/>
    <property type="match status" value="1"/>
</dbReference>
<dbReference type="PANTHER" id="PTHR46329:SF6">
    <property type="entry name" value="KILLER CELL LECTIN-LIKE RECEPTOR 4-RELATED"/>
    <property type="match status" value="1"/>
</dbReference>
<dbReference type="Pfam" id="PF00059">
    <property type="entry name" value="Lectin_C"/>
    <property type="match status" value="1"/>
</dbReference>
<dbReference type="Pfam" id="PF08391">
    <property type="entry name" value="Ly49"/>
    <property type="match status" value="1"/>
</dbReference>
<dbReference type="SMART" id="SM00034">
    <property type="entry name" value="CLECT"/>
    <property type="match status" value="1"/>
</dbReference>
<dbReference type="SUPFAM" id="SSF56436">
    <property type="entry name" value="C-type lectin-like"/>
    <property type="match status" value="1"/>
</dbReference>
<dbReference type="PROSITE" id="PS50041">
    <property type="entry name" value="C_TYPE_LECTIN_2"/>
    <property type="match status" value="1"/>
</dbReference>
<feature type="chain" id="PRO_0000046682" description="Killer cell lectin-like receptor 4">
    <location>
        <begin position="1"/>
        <end position="263"/>
    </location>
</feature>
<feature type="topological domain" description="Cytoplasmic" evidence="1">
    <location>
        <begin position="1"/>
        <end position="44"/>
    </location>
</feature>
<feature type="transmembrane region" description="Helical; Signal-anchor for type II membrane protein" evidence="1">
    <location>
        <begin position="45"/>
        <end position="65"/>
    </location>
</feature>
<feature type="topological domain" description="Extracellular" evidence="1">
    <location>
        <begin position="66"/>
        <end position="263"/>
    </location>
</feature>
<feature type="domain" description="C-type lectin" evidence="2">
    <location>
        <begin position="139"/>
        <end position="258"/>
    </location>
</feature>
<feature type="glycosylation site" description="N-linked (GlcNAc...) asparagine" evidence="1">
    <location>
        <position position="87"/>
    </location>
</feature>
<feature type="glycosylation site" description="N-linked (GlcNAc...) asparagine" evidence="1">
    <location>
        <position position="104"/>
    </location>
</feature>
<feature type="glycosylation site" description="N-linked (GlcNAc...) asparagine" evidence="1">
    <location>
        <position position="170"/>
    </location>
</feature>
<feature type="glycosylation site" description="N-linked (GlcNAc...) asparagine" evidence="1">
    <location>
        <position position="222"/>
    </location>
</feature>
<feature type="disulfide bond" evidence="2">
    <location>
        <begin position="146"/>
        <end position="151"/>
    </location>
</feature>
<feature type="disulfide bond" evidence="2">
    <location>
        <begin position="164"/>
        <end position="252"/>
    </location>
</feature>
<feature type="disulfide bond" evidence="2">
    <location>
        <begin position="168"/>
        <end position="254"/>
    </location>
</feature>
<feature type="disulfide bond" evidence="2">
    <location>
        <begin position="233"/>
        <end position="246"/>
    </location>
</feature>
<feature type="splice variant" id="VSP_003068" description="In isoform D2." evidence="4">
    <location>
        <begin position="39"/>
        <end position="41"/>
    </location>
</feature>
<feature type="sequence variant" description="In strain: NOD and NOR.">
    <original>E</original>
    <variation>K</variation>
    <location>
        <position position="5"/>
    </location>
</feature>
<feature type="sequence variant" description="In strain: NOD and NOR.">
    <original>R</original>
    <variation>W</variation>
    <location>
        <position position="29"/>
    </location>
</feature>
<feature type="sequence variant" description="In strain: NOD and NOR.">
    <original>E</original>
    <variation>Q</variation>
    <location>
        <position position="32"/>
    </location>
</feature>
<feature type="sequence variant" description="In strain: NOD and NOR.">
    <original>R</original>
    <variation>G</variation>
    <location>
        <position position="35"/>
    </location>
</feature>
<feature type="sequence variant" description="In strain: NOD and NOR.">
    <original>L</original>
    <variation>F</variation>
    <location>
        <position position="45"/>
    </location>
</feature>
<feature type="sequence variant" description="In strain: NOD and NOR.">
    <original>T</original>
    <variation>I</variation>
    <location>
        <position position="60"/>
    </location>
</feature>
<feature type="sequence variant" description="In strain: NOD and NOR.">
    <original>K</original>
    <variation>Q</variation>
    <location>
        <position position="79"/>
    </location>
</feature>
<feature type="sequence variant" description="In strain: NOD and NOR.">
    <original>Y</original>
    <variation>S</variation>
    <location>
        <position position="132"/>
    </location>
</feature>
<feature type="sequence variant" description="In strain: NOD and NOR.">
    <original>L</original>
    <variation>F</variation>
    <location>
        <position position="189"/>
    </location>
</feature>
<sequence length="263" mass="30872">MTEQEDTFSAVRFHKSSGLQNEMRLKETRKPEKARLRVCSVPWQLIVIALGILISLRLVTVAVLMTNIFQYGQQKHELKEFLKHHNNCSIMQSDINLKDELLKNKSIECNLLESLNRDQNILCDKTRTVLDYLQHTGRGVKVYWFCYGMKCYYFVMDRKPWSRCKQSCQNSSLTLLKIDDEDELKFLQLVVPSDSCWIGLSYDNKKKDWAWIDNRPSKLALNTTKYNIRDGGCMFLSKTRLDNNYCDQSFICICGKRLDKFPH</sequence>
<name>KLRA4_MOUSE</name>
<evidence type="ECO:0000255" key="1"/>
<evidence type="ECO:0000255" key="2">
    <source>
        <dbReference type="PROSITE-ProRule" id="PRU00040"/>
    </source>
</evidence>
<evidence type="ECO:0000269" key="3">
    <source>
    </source>
</evidence>
<evidence type="ECO:0000303" key="4">
    <source>
    </source>
</evidence>
<evidence type="ECO:0000305" key="5"/>
<reference key="1">
    <citation type="journal article" date="1994" name="J. Immunol.">
        <title>Ly-49 multigene family expressed by IL-2-activated NK cells.</title>
        <authorList>
            <person name="Smith H.R.C."/>
            <person name="Karlhofer F.M."/>
            <person name="Yokoyama W.M."/>
        </authorList>
    </citation>
    <scope>NUCLEOTIDE SEQUENCE [MRNA] (ISOFORM D2)</scope>
    <source>
        <strain>C57BL/6J</strain>
        <tissue>Spleen</tissue>
    </source>
</reference>
<reference key="2">
    <citation type="journal article" date="1996" name="Immunogenetics">
        <title>Alternatively spliced Ly-49D and H transcripts are found in IL-2-activated NK cells.</title>
        <authorList>
            <person name="Silver E.T."/>
            <person name="Elliott J.F."/>
            <person name="Kane K.P."/>
        </authorList>
    </citation>
    <scope>NUCLEOTIDE SEQUENCE [MRNA]</scope>
    <scope>ALTERNATIVE SPLICING</scope>
    <source>
        <strain>C57BL/6J</strain>
    </source>
</reference>
<reference key="3">
    <citation type="journal article" date="2000" name="J. Immunol.">
        <title>Ly-49P activates NK-mediated lysis by recognizing H-2Dd.</title>
        <authorList>
            <person name="Silver E.T."/>
            <person name="Gong D.-E."/>
            <person name="Chang C.S."/>
            <person name="Amrani A."/>
            <person name="Santamaria P."/>
            <person name="Kane K.P."/>
        </authorList>
    </citation>
    <scope>NUCLEOTIDE SEQUENCE [MRNA] (ISOFORM D1)</scope>
    <source>
        <strain>NOD</strain>
        <strain>NOR</strain>
    </source>
</reference>
<reference key="4">
    <citation type="journal article" date="1998" name="J. Immunol.">
        <title>Ly-49D and Ly-49H associate with mouse DAP12 and form activating receptors.</title>
        <authorList>
            <person name="Smith K.M."/>
            <person name="Wu J."/>
            <person name="Bakker A.B."/>
            <person name="Phillips J.H."/>
            <person name="Lanier L.L."/>
        </authorList>
    </citation>
    <scope>FUNCTION</scope>
    <scope>INTERACTION WITH TYROBP</scope>
</reference>
<accession>Q60651</accession>
<accession>O78026</accession>
<accession>Q9EPA5</accession>
<proteinExistence type="evidence at protein level"/>
<comment type="function">
    <text evidence="3">Receptor on natural killer (NK) cells for class I MHC.</text>
</comment>
<comment type="subunit">
    <text evidence="3">Homodimer; disulfide-linked. Interacts with the adapter protein TYROBP/DAP12; the interaction leads to natural killer cell activation (PubMed:9647200).</text>
</comment>
<comment type="subcellular location">
    <subcellularLocation>
        <location evidence="5">Cell membrane</location>
        <topology evidence="1">Single-pass type II membrane protein</topology>
    </subcellularLocation>
</comment>
<comment type="alternative products">
    <event type="alternative splicing"/>
    <isoform>
        <id>Q60651-1</id>
        <name>D1</name>
        <sequence type="displayed"/>
    </isoform>
    <isoform>
        <id>Q60651-2</id>
        <name>D2</name>
        <sequence type="described" ref="VSP_003068"/>
    </isoform>
</comment>
<keyword id="KW-0025">Alternative splicing</keyword>
<keyword id="KW-0130">Cell adhesion</keyword>
<keyword id="KW-1003">Cell membrane</keyword>
<keyword id="KW-1015">Disulfide bond</keyword>
<keyword id="KW-0325">Glycoprotein</keyword>
<keyword id="KW-0430">Lectin</keyword>
<keyword id="KW-0472">Membrane</keyword>
<keyword id="KW-0675">Receptor</keyword>
<keyword id="KW-1185">Reference proteome</keyword>
<keyword id="KW-0735">Signal-anchor</keyword>
<keyword id="KW-0812">Transmembrane</keyword>
<keyword id="KW-1133">Transmembrane helix</keyword>
<gene>
    <name type="primary">Klra4</name>
    <name type="synonym">Ly-49d</name>
    <name type="synonym">Ly49-d</name>
    <name type="synonym">Ly49d</name>
</gene>